<keyword id="KW-0255">Endonuclease</keyword>
<keyword id="KW-0378">Hydrolase</keyword>
<keyword id="KW-0540">Nuclease</keyword>
<keyword id="KW-0680">Restriction system</keyword>
<protein>
    <recommendedName>
        <fullName evidence="2">Type II restriction enzyme HgiBI</fullName>
        <shortName evidence="5">R.HgiBI</shortName>
        <ecNumber evidence="1">3.1.21.4</ecNumber>
    </recommendedName>
    <alternativeName>
        <fullName>Endonuclease HgiBI</fullName>
    </alternativeName>
    <alternativeName>
        <fullName>Type-2 restriction enzyme HgiBI</fullName>
    </alternativeName>
</protein>
<proteinExistence type="evidence at protein level"/>
<evidence type="ECO:0000269" key="1">
    <source>
    </source>
</evidence>
<evidence type="ECO:0000303" key="2">
    <source>
    </source>
</evidence>
<evidence type="ECO:0000303" key="3">
    <source>
    </source>
</evidence>
<evidence type="ECO:0000305" key="4"/>
<evidence type="ECO:0000305" key="5">
    <source>
    </source>
</evidence>
<comment type="function">
    <text evidence="1 2">A P subtype restriction enzyme that recognizes the double-stranded sequence 5'-GGWCC-3' and cleaves after G-1 (PubMed:12654995, PubMed:7607523). This system is less active than isoschizomeric RM.HgiEI (PubMed:7607523).</text>
</comment>
<comment type="catalytic activity">
    <reaction evidence="1">
        <text>Endonucleolytic cleavage of DNA to give specific double-stranded fragments with terminal 5'-phosphates.</text>
        <dbReference type="EC" id="3.1.21.4"/>
    </reaction>
</comment>
<comment type="similarity">
    <text evidence="4">Belongs to the TdeIII type II restriction endonuclease family.</text>
</comment>
<name>T2B1_HERAU</name>
<sequence>MAINPITRNKIKDYLNSFIQQQLSVYSQRSLREFQDVDSYPSSLSKDGDLKPFHASLIPASIMRLNRFERSLSTGLGSTFEECTRLIALDHHAVALRNYDIQAALDQAQWAAIDQLISTIDRGLKHQTPSLNQMLEQIQSIPLTGILETHIVRADLYIQRHDGSELFFEIKSPKPSKGQCLEVMQRLLRIYTIKQQSAVPVKAFYAMAYNPWGISRASYRSSITKKYTDFSNAVVIGQEFWSLIGEPSTYTELLEIYHEVGLAKSAEITQKLLQ</sequence>
<feature type="chain" id="PRO_0000077310" description="Type II restriction enzyme HgiBI">
    <location>
        <begin position="1"/>
        <end position="274"/>
    </location>
</feature>
<feature type="mutagenesis site" description="Increased specific activity." evidence="1">
    <original>S</original>
    <variation>D</variation>
    <location>
        <position position="176"/>
    </location>
</feature>
<organism>
    <name type="scientific">Herpetosiphon aurantiacus</name>
    <name type="common">Herpetosiphon giganteus</name>
    <dbReference type="NCBI Taxonomy" id="65"/>
    <lineage>
        <taxon>Bacteria</taxon>
        <taxon>Bacillati</taxon>
        <taxon>Chloroflexota</taxon>
        <taxon>Chloroflexia</taxon>
        <taxon>Herpetosiphonales</taxon>
        <taxon>Herpetosiphonaceae</taxon>
        <taxon>Herpetosiphon</taxon>
    </lineage>
</organism>
<reference key="1">
    <citation type="journal article" date="1991" name="Nucleic Acids Res.">
        <title>Isolation and genetic structure of the AvaII isoschizomeric restriction-modification system HgiBI from Herpetosiphon giganteus Hpg5: M.HgiBI reveals high homology to M.BanI.</title>
        <authorList>
            <person name="Duesterhoeft A."/>
            <person name="Erdmann D."/>
            <person name="Kroeger M."/>
        </authorList>
    </citation>
    <scope>NUCLEOTIDE SEQUENCE [GENOMIC DNA]</scope>
    <source>
        <strain>HPG5</strain>
    </source>
</reference>
<reference key="2">
    <citation type="journal article" date="1995" name="Gene">
        <title>Organization and gene expression within restriction-modification systems of Herpetosiphon giganteus.</title>
        <authorList>
            <person name="Kroeger M."/>
            <person name="Blum E."/>
            <person name="Deppe E."/>
            <person name="Duesterhoeft A."/>
            <person name="Erdmann D."/>
            <person name="Kilz S."/>
            <person name="Meyer-Rogge S."/>
            <person name="Moestl D."/>
        </authorList>
    </citation>
    <scope>DISCUSSION OF SEQUENCE</scope>
    <scope>FUNCTION</scope>
    <scope>CATALYTIC ACTIVITY</scope>
    <scope>MUTAGENESIS OF SER-176</scope>
</reference>
<reference key="3">
    <citation type="journal article" date="2003" name="Nucleic Acids Res.">
        <title>A nomenclature for restriction enzymes, DNA methyltransferases, homing endonucleases and their genes.</title>
        <authorList>
            <person name="Roberts R.J."/>
            <person name="Belfort M."/>
            <person name="Bestor T."/>
            <person name="Bhagwat A.S."/>
            <person name="Bickle T.A."/>
            <person name="Bitinaite J."/>
            <person name="Blumenthal R.M."/>
            <person name="Degtyarev S.K."/>
            <person name="Dryden D.T."/>
            <person name="Dybvig K."/>
            <person name="Firman K."/>
            <person name="Gromova E.S."/>
            <person name="Gumport R.I."/>
            <person name="Halford S.E."/>
            <person name="Hattman S."/>
            <person name="Heitman J."/>
            <person name="Hornby D.P."/>
            <person name="Janulaitis A."/>
            <person name="Jeltsch A."/>
            <person name="Josephsen J."/>
            <person name="Kiss A."/>
            <person name="Klaenhammer T.R."/>
            <person name="Kobayashi I."/>
            <person name="Kong H."/>
            <person name="Krueger D.H."/>
            <person name="Lacks S."/>
            <person name="Marinus M.G."/>
            <person name="Miyahara M."/>
            <person name="Morgan R.D."/>
            <person name="Murray N.E."/>
            <person name="Nagaraja V."/>
            <person name="Piekarowicz A."/>
            <person name="Pingoud A."/>
            <person name="Raleigh E."/>
            <person name="Rao D.N."/>
            <person name="Reich N."/>
            <person name="Repin V.E."/>
            <person name="Selker E.U."/>
            <person name="Shaw P.C."/>
            <person name="Stein D.C."/>
            <person name="Stoddard B.L."/>
            <person name="Szybalski W."/>
            <person name="Trautner T.A."/>
            <person name="Van Etten J.L."/>
            <person name="Vitor J.M."/>
            <person name="Wilson G.G."/>
            <person name="Xu S.Y."/>
        </authorList>
    </citation>
    <scope>NOMENCLATURE</scope>
    <scope>SUBTYPE</scope>
</reference>
<gene>
    <name evidence="3" type="primary">hgiBIR</name>
</gene>
<dbReference type="EC" id="3.1.21.4" evidence="1"/>
<dbReference type="EMBL" id="X55137">
    <property type="protein sequence ID" value="CAA38928.1"/>
    <property type="molecule type" value="Genomic_DNA"/>
</dbReference>
<dbReference type="PIR" id="S22308">
    <property type="entry name" value="S22308"/>
</dbReference>
<dbReference type="REBASE" id="1098">
    <property type="entry name" value="HgiBI"/>
</dbReference>
<dbReference type="PRO" id="PR:P25257"/>
<dbReference type="GO" id="GO:0003677">
    <property type="term" value="F:DNA binding"/>
    <property type="evidence" value="ECO:0007669"/>
    <property type="project" value="InterPro"/>
</dbReference>
<dbReference type="GO" id="GO:0009036">
    <property type="term" value="F:type II site-specific deoxyribonuclease activity"/>
    <property type="evidence" value="ECO:0007669"/>
    <property type="project" value="UniProtKB-EC"/>
</dbReference>
<dbReference type="GO" id="GO:0009307">
    <property type="term" value="P:DNA restriction-modification system"/>
    <property type="evidence" value="ECO:0007669"/>
    <property type="project" value="UniProtKB-KW"/>
</dbReference>
<dbReference type="InterPro" id="IPR019045">
    <property type="entry name" value="Restrct_endonuc_II_TdeIII"/>
</dbReference>
<dbReference type="Pfam" id="PF09520">
    <property type="entry name" value="RE_TdeIII"/>
    <property type="match status" value="1"/>
</dbReference>
<accession>P25257</accession>